<proteinExistence type="inferred from homology"/>
<evidence type="ECO:0000255" key="1">
    <source>
        <dbReference type="HAMAP-Rule" id="MF_01346"/>
    </source>
</evidence>
<feature type="chain" id="PRO_1000055067" description="ATP synthase subunit alpha">
    <location>
        <begin position="1"/>
        <end position="513"/>
    </location>
</feature>
<feature type="binding site" evidence="1">
    <location>
        <begin position="169"/>
        <end position="176"/>
    </location>
    <ligand>
        <name>ATP</name>
        <dbReference type="ChEBI" id="CHEBI:30616"/>
    </ligand>
</feature>
<feature type="site" description="Required for activity" evidence="1">
    <location>
        <position position="373"/>
    </location>
</feature>
<sequence>MQLNSTEISELIKKRIAQFDVVSEARNTGTIVSVSDGIIRIHGLSDVMQGEMIALPGNRYAMALNLERDSVGAVVMGPYADLAEGMEVQCTGRILEVPVGRGLLGRVVNTLGQPIDGKGEIENDGFSPVEVIAPGVIDRRSVDQPVQTGYKAVDSMVPIGRGQRELIIGDRQTGKTALAIDAIINQRNSGIKCIYVAIGQKASTIANVVRKLEEHGALANTIVVAASASESAALQYLAPYAGCAMGEYFRDRGEDALIVYDDLSKQAVAYRQISLLLRRPPGREAYPGDVFYLHSRLLERASRVNEDYVEKFTKGEVKGKTGSLTALPIIETQAGDVSAFVPTNVISITDGQIFLESNLFNSGIRPAVNPGISVSRVGGSAQTKVIKKLAGGIRTALAQYRELAAFAQFASDLDDATRKQLSHGEKVTELLKQKQFAPLSVAEQAVVLFAVEFGYLDDVELSKIASFETALLDYSNRNHAEFMQELNKTGNYNDEIKDTLKGILDSFKANSAW</sequence>
<reference key="1">
    <citation type="journal article" date="2007" name="Genome Biol.">
        <title>Characterization and modeling of the Haemophilus influenzae core and supragenomes based on the complete genomic sequences of Rd and 12 clinical nontypeable strains.</title>
        <authorList>
            <person name="Hogg J.S."/>
            <person name="Hu F.Z."/>
            <person name="Janto B."/>
            <person name="Boissy R."/>
            <person name="Hayes J."/>
            <person name="Keefe R."/>
            <person name="Post J.C."/>
            <person name="Ehrlich G.D."/>
        </authorList>
    </citation>
    <scope>NUCLEOTIDE SEQUENCE [LARGE SCALE GENOMIC DNA]</scope>
    <source>
        <strain>PittEE</strain>
    </source>
</reference>
<gene>
    <name evidence="1" type="primary">atpA</name>
    <name type="ordered locus">CGSHiEE_00580</name>
</gene>
<comment type="function">
    <text evidence="1">Produces ATP from ADP in the presence of a proton gradient across the membrane. The alpha chain is a regulatory subunit.</text>
</comment>
<comment type="catalytic activity">
    <reaction evidence="1">
        <text>ATP + H2O + 4 H(+)(in) = ADP + phosphate + 5 H(+)(out)</text>
        <dbReference type="Rhea" id="RHEA:57720"/>
        <dbReference type="ChEBI" id="CHEBI:15377"/>
        <dbReference type="ChEBI" id="CHEBI:15378"/>
        <dbReference type="ChEBI" id="CHEBI:30616"/>
        <dbReference type="ChEBI" id="CHEBI:43474"/>
        <dbReference type="ChEBI" id="CHEBI:456216"/>
        <dbReference type="EC" id="7.1.2.2"/>
    </reaction>
</comment>
<comment type="subunit">
    <text evidence="1">F-type ATPases have 2 components, CF(1) - the catalytic core - and CF(0) - the membrane proton channel. CF(1) has five subunits: alpha(3), beta(3), gamma(1), delta(1), epsilon(1). CF(0) has three main subunits: a(1), b(2) and c(9-12). The alpha and beta chains form an alternating ring which encloses part of the gamma chain. CF(1) is attached to CF(0) by a central stalk formed by the gamma and epsilon chains, while a peripheral stalk is formed by the delta and b chains.</text>
</comment>
<comment type="subcellular location">
    <subcellularLocation>
        <location evidence="1">Cell inner membrane</location>
        <topology evidence="1">Peripheral membrane protein</topology>
    </subcellularLocation>
</comment>
<comment type="similarity">
    <text evidence="1">Belongs to the ATPase alpha/beta chains family.</text>
</comment>
<accession>A5UA09</accession>
<protein>
    <recommendedName>
        <fullName evidence="1">ATP synthase subunit alpha</fullName>
        <ecNumber evidence="1">7.1.2.2</ecNumber>
    </recommendedName>
    <alternativeName>
        <fullName evidence="1">ATP synthase F1 sector subunit alpha</fullName>
    </alternativeName>
    <alternativeName>
        <fullName evidence="1">F-ATPase subunit alpha</fullName>
    </alternativeName>
</protein>
<organism>
    <name type="scientific">Haemophilus influenzae (strain PittEE)</name>
    <dbReference type="NCBI Taxonomy" id="374930"/>
    <lineage>
        <taxon>Bacteria</taxon>
        <taxon>Pseudomonadati</taxon>
        <taxon>Pseudomonadota</taxon>
        <taxon>Gammaproteobacteria</taxon>
        <taxon>Pasteurellales</taxon>
        <taxon>Pasteurellaceae</taxon>
        <taxon>Haemophilus</taxon>
    </lineage>
</organism>
<name>ATPA_HAEIE</name>
<keyword id="KW-0066">ATP synthesis</keyword>
<keyword id="KW-0067">ATP-binding</keyword>
<keyword id="KW-0997">Cell inner membrane</keyword>
<keyword id="KW-1003">Cell membrane</keyword>
<keyword id="KW-0139">CF(1)</keyword>
<keyword id="KW-0375">Hydrogen ion transport</keyword>
<keyword id="KW-0406">Ion transport</keyword>
<keyword id="KW-0472">Membrane</keyword>
<keyword id="KW-0547">Nucleotide-binding</keyword>
<keyword id="KW-1278">Translocase</keyword>
<keyword id="KW-0813">Transport</keyword>
<dbReference type="EC" id="7.1.2.2" evidence="1"/>
<dbReference type="EMBL" id="CP000671">
    <property type="protein sequence ID" value="ABQ97610.1"/>
    <property type="molecule type" value="Genomic_DNA"/>
</dbReference>
<dbReference type="SMR" id="A5UA09"/>
<dbReference type="KEGG" id="hip:CGSHiEE_00580"/>
<dbReference type="HOGENOM" id="CLU_010091_2_1_6"/>
<dbReference type="GO" id="GO:0005886">
    <property type="term" value="C:plasma membrane"/>
    <property type="evidence" value="ECO:0007669"/>
    <property type="project" value="UniProtKB-SubCell"/>
</dbReference>
<dbReference type="GO" id="GO:0045259">
    <property type="term" value="C:proton-transporting ATP synthase complex"/>
    <property type="evidence" value="ECO:0007669"/>
    <property type="project" value="UniProtKB-KW"/>
</dbReference>
<dbReference type="GO" id="GO:0043531">
    <property type="term" value="F:ADP binding"/>
    <property type="evidence" value="ECO:0007669"/>
    <property type="project" value="TreeGrafter"/>
</dbReference>
<dbReference type="GO" id="GO:0005524">
    <property type="term" value="F:ATP binding"/>
    <property type="evidence" value="ECO:0007669"/>
    <property type="project" value="UniProtKB-UniRule"/>
</dbReference>
<dbReference type="GO" id="GO:0046933">
    <property type="term" value="F:proton-transporting ATP synthase activity, rotational mechanism"/>
    <property type="evidence" value="ECO:0007669"/>
    <property type="project" value="UniProtKB-UniRule"/>
</dbReference>
<dbReference type="CDD" id="cd18113">
    <property type="entry name" value="ATP-synt_F1_alpha_C"/>
    <property type="match status" value="1"/>
</dbReference>
<dbReference type="CDD" id="cd18116">
    <property type="entry name" value="ATP-synt_F1_alpha_N"/>
    <property type="match status" value="1"/>
</dbReference>
<dbReference type="CDD" id="cd01132">
    <property type="entry name" value="F1-ATPase_alpha_CD"/>
    <property type="match status" value="1"/>
</dbReference>
<dbReference type="FunFam" id="1.20.150.20:FF:000001">
    <property type="entry name" value="ATP synthase subunit alpha"/>
    <property type="match status" value="1"/>
</dbReference>
<dbReference type="FunFam" id="2.40.30.20:FF:000001">
    <property type="entry name" value="ATP synthase subunit alpha"/>
    <property type="match status" value="1"/>
</dbReference>
<dbReference type="FunFam" id="3.40.50.300:FF:000002">
    <property type="entry name" value="ATP synthase subunit alpha"/>
    <property type="match status" value="1"/>
</dbReference>
<dbReference type="Gene3D" id="2.40.30.20">
    <property type="match status" value="1"/>
</dbReference>
<dbReference type="Gene3D" id="1.20.150.20">
    <property type="entry name" value="ATP synthase alpha/beta chain, C-terminal domain"/>
    <property type="match status" value="1"/>
</dbReference>
<dbReference type="Gene3D" id="3.40.50.300">
    <property type="entry name" value="P-loop containing nucleotide triphosphate hydrolases"/>
    <property type="match status" value="1"/>
</dbReference>
<dbReference type="HAMAP" id="MF_01346">
    <property type="entry name" value="ATP_synth_alpha_bact"/>
    <property type="match status" value="1"/>
</dbReference>
<dbReference type="InterPro" id="IPR023366">
    <property type="entry name" value="ATP_synth_asu-like_sf"/>
</dbReference>
<dbReference type="InterPro" id="IPR000793">
    <property type="entry name" value="ATP_synth_asu_C"/>
</dbReference>
<dbReference type="InterPro" id="IPR038376">
    <property type="entry name" value="ATP_synth_asu_C_sf"/>
</dbReference>
<dbReference type="InterPro" id="IPR033732">
    <property type="entry name" value="ATP_synth_F1_a_nt-bd_dom"/>
</dbReference>
<dbReference type="InterPro" id="IPR005294">
    <property type="entry name" value="ATP_synth_F1_asu"/>
</dbReference>
<dbReference type="InterPro" id="IPR020003">
    <property type="entry name" value="ATPase_a/bsu_AS"/>
</dbReference>
<dbReference type="InterPro" id="IPR004100">
    <property type="entry name" value="ATPase_F1/V1/A1_a/bsu_N"/>
</dbReference>
<dbReference type="InterPro" id="IPR036121">
    <property type="entry name" value="ATPase_F1/V1/A1_a/bsu_N_sf"/>
</dbReference>
<dbReference type="InterPro" id="IPR000194">
    <property type="entry name" value="ATPase_F1/V1/A1_a/bsu_nucl-bd"/>
</dbReference>
<dbReference type="InterPro" id="IPR027417">
    <property type="entry name" value="P-loop_NTPase"/>
</dbReference>
<dbReference type="NCBIfam" id="TIGR00962">
    <property type="entry name" value="atpA"/>
    <property type="match status" value="1"/>
</dbReference>
<dbReference type="NCBIfam" id="NF009884">
    <property type="entry name" value="PRK13343.1"/>
    <property type="match status" value="1"/>
</dbReference>
<dbReference type="PANTHER" id="PTHR48082">
    <property type="entry name" value="ATP SYNTHASE SUBUNIT ALPHA, MITOCHONDRIAL"/>
    <property type="match status" value="1"/>
</dbReference>
<dbReference type="PANTHER" id="PTHR48082:SF2">
    <property type="entry name" value="ATP SYNTHASE SUBUNIT ALPHA, MITOCHONDRIAL"/>
    <property type="match status" value="1"/>
</dbReference>
<dbReference type="Pfam" id="PF00006">
    <property type="entry name" value="ATP-synt_ab"/>
    <property type="match status" value="1"/>
</dbReference>
<dbReference type="Pfam" id="PF00306">
    <property type="entry name" value="ATP-synt_ab_C"/>
    <property type="match status" value="1"/>
</dbReference>
<dbReference type="Pfam" id="PF02874">
    <property type="entry name" value="ATP-synt_ab_N"/>
    <property type="match status" value="1"/>
</dbReference>
<dbReference type="PIRSF" id="PIRSF039088">
    <property type="entry name" value="F_ATPase_subunit_alpha"/>
    <property type="match status" value="1"/>
</dbReference>
<dbReference type="SUPFAM" id="SSF47917">
    <property type="entry name" value="C-terminal domain of alpha and beta subunits of F1 ATP synthase"/>
    <property type="match status" value="1"/>
</dbReference>
<dbReference type="SUPFAM" id="SSF50615">
    <property type="entry name" value="N-terminal domain of alpha and beta subunits of F1 ATP synthase"/>
    <property type="match status" value="1"/>
</dbReference>
<dbReference type="SUPFAM" id="SSF52540">
    <property type="entry name" value="P-loop containing nucleoside triphosphate hydrolases"/>
    <property type="match status" value="1"/>
</dbReference>
<dbReference type="PROSITE" id="PS00152">
    <property type="entry name" value="ATPASE_ALPHA_BETA"/>
    <property type="match status" value="1"/>
</dbReference>